<accession>P12912</accession>
<dbReference type="EMBL" id="D00220">
    <property type="protein sequence ID" value="BAA00160.1"/>
    <property type="molecule type" value="Genomic_DNA"/>
</dbReference>
<dbReference type="PIR" id="D28885">
    <property type="entry name" value="QQVLCP"/>
</dbReference>
<dbReference type="SMR" id="P12912"/>
<dbReference type="Proteomes" id="UP000007928">
    <property type="component" value="Segment"/>
</dbReference>
<dbReference type="GO" id="GO:0033650">
    <property type="term" value="C:host cell mitochondrion"/>
    <property type="evidence" value="ECO:0007669"/>
    <property type="project" value="UniProtKB-SubCell"/>
</dbReference>
<dbReference type="GO" id="GO:0042025">
    <property type="term" value="C:host cell nucleus"/>
    <property type="evidence" value="ECO:0007669"/>
    <property type="project" value="UniProtKB-SubCell"/>
</dbReference>
<dbReference type="GO" id="GO:0006351">
    <property type="term" value="P:DNA-templated transcription"/>
    <property type="evidence" value="ECO:0007669"/>
    <property type="project" value="UniProtKB-UniRule"/>
</dbReference>
<dbReference type="GO" id="GO:0085033">
    <property type="term" value="P:symbiont-mediated activation of host NF-kappaB cascade"/>
    <property type="evidence" value="ECO:0007669"/>
    <property type="project" value="UniProtKB-UniRule"/>
</dbReference>
<dbReference type="GO" id="GO:0039592">
    <property type="term" value="P:symbiont-mediated arrest of host cell cycle during G2/M transition"/>
    <property type="evidence" value="ECO:0007669"/>
    <property type="project" value="UniProtKB-UniRule"/>
</dbReference>
<dbReference type="GO" id="GO:0019079">
    <property type="term" value="P:viral genome replication"/>
    <property type="evidence" value="ECO:0007669"/>
    <property type="project" value="UniProtKB-UniRule"/>
</dbReference>
<dbReference type="HAMAP" id="MF_04074">
    <property type="entry name" value="HBV_X"/>
    <property type="match status" value="1"/>
</dbReference>
<dbReference type="InterPro" id="IPR000236">
    <property type="entry name" value="Transactivation_prot_X"/>
</dbReference>
<dbReference type="Pfam" id="PF00739">
    <property type="entry name" value="X"/>
    <property type="match status" value="1"/>
</dbReference>
<gene>
    <name evidence="1" type="primary">X</name>
</gene>
<keyword id="KW-1074">Activation of host NF-kappa-B by virus</keyword>
<keyword id="KW-0010">Activator</keyword>
<keyword id="KW-0053">Apoptosis</keyword>
<keyword id="KW-1035">Host cytoplasm</keyword>
<keyword id="KW-1079">Host G2/M cell cycle arrest by virus</keyword>
<keyword id="KW-1045">Host mitochondrion</keyword>
<keyword id="KW-1048">Host nucleus</keyword>
<keyword id="KW-0945">Host-virus interaction</keyword>
<keyword id="KW-1121">Modulation of host cell cycle by virus</keyword>
<keyword id="KW-0804">Transcription</keyword>
<keyword id="KW-0805">Transcription regulation</keyword>
<feature type="chain" id="PRO_0000222365" description="Protein X">
    <location>
        <begin position="1"/>
        <end position="154"/>
    </location>
</feature>
<feature type="region of interest" description="Mitochondrial targeting sequence" evidence="1">
    <location>
        <begin position="68"/>
        <end position="117"/>
    </location>
</feature>
<comment type="function">
    <text evidence="1">Multifunctional protein that plays a role in silencing host antiviral defenses and promoting viral transcription. Does not seem to be essential for HBV infection. May be directly involved in development of cirrhosis and liver cancer (hepatocellular carcinoma). Most of cytosolic activities involve modulation of cytosolic calcium. The effect on apoptosis is controversial depending on the cell types in which the studies have been conducted. May induce apoptosis by localizing in mitochondria and causing loss of mitochondrial membrane potential. May also modulate apoptosis by binding host CFLAR, a key regulator of the death-inducing signaling complex (DISC). Promotes viral transcription by using the host E3 ubiquitin ligase DDB1 to target the SMC5-SMC6 complex to proteasomal degradation. This host complex would otherwise bind to viral episomal DNA, and prevents its transcription. Moderately stimulates transcription of many different viral and cellular transcription elements. Promoters and enhancers stimulated by HBx contain DNA binding sites for NF-kappa-B, AP-1, AP-2, c-EBP, ATF/CREB, or the calcium-activated factor NF-AT.</text>
</comment>
<comment type="subunit">
    <text evidence="1">May form homodimer. May interact with host CEBPA, CFLAR, CREB1, DDB1, E4F1, HBXIP, HSPD1/HSP60, NFKBIA, POLR2E and SMAD4. Interacts with host SMC5-SMC6 complex and induces its degradation. Interacts with host TRPC4AP; leading to prevent ubiquitination of TRPC4AP. Interacts with host PLSCR1; this interaction promotes ubiquitination and degradation of HBx and impairs HBx-mediated cell proliferation.</text>
</comment>
<comment type="subcellular location">
    <subcellularLocation>
        <location evidence="1">Host cytoplasm</location>
    </subcellularLocation>
    <subcellularLocation>
        <location evidence="1">Host nucleus</location>
    </subcellularLocation>
    <subcellularLocation>
        <location evidence="1">Host mitochondrion</location>
    </subcellularLocation>
    <text evidence="1">Mainly cytoplasmic as only a fraction is detected in the nucleus. In cytoplasm, a minor fraction associates with mitochondria or proteasomes.</text>
</comment>
<comment type="PTM">
    <text evidence="1">A fraction may be phosphorylated in insect cells and HepG2 cells, a human hepatoblastoma cell line. Phosphorylated in vitro by host protein kinase C or mitogen-activated protein kinase. N-acetylated in insect cells.</text>
</comment>
<comment type="similarity">
    <text evidence="1">Belongs to the orthohepadnavirus protein X family.</text>
</comment>
<organism>
    <name type="scientific">Chimpanzee hepatitis B virus (isolate United Kingdom/LSH/1988)</name>
    <name type="common">HBVcpz</name>
    <dbReference type="NCBI Taxonomy" id="10414"/>
    <lineage>
        <taxon>Viruses</taxon>
        <taxon>Riboviria</taxon>
        <taxon>Pararnavirae</taxon>
        <taxon>Artverviricota</taxon>
        <taxon>Revtraviricetes</taxon>
        <taxon>Blubervirales</taxon>
        <taxon>Hepadnaviridae</taxon>
        <taxon>Orthohepadnavirus</taxon>
        <taxon>Hepatitis B virus</taxon>
    </lineage>
</organism>
<reference key="1">
    <citation type="journal article" date="1988" name="J. Gen. Virol.">
        <title>The complete nucleotide sequence of the genome of a hepatitis B virus isolated from a naturally infected chimpanzee.</title>
        <authorList>
            <person name="Vaudin M."/>
            <person name="Wolstenholme A.J."/>
            <person name="Tsiquaye K.N."/>
            <person name="Zuckerman A.J."/>
            <person name="Harrison T.J."/>
        </authorList>
    </citation>
    <scope>NUCLEOTIDE SEQUENCE [GENOMIC DNA]</scope>
</reference>
<name>X_HBVCP</name>
<organismHost>
    <name type="scientific">Pan troglodytes</name>
    <name type="common">Chimpanzee</name>
    <dbReference type="NCBI Taxonomy" id="9598"/>
</organismHost>
<protein>
    <recommendedName>
        <fullName evidence="1">Protein X</fullName>
    </recommendedName>
    <alternativeName>
        <fullName evidence="1">HBx</fullName>
    </alternativeName>
    <alternativeName>
        <fullName evidence="1">Peptide X</fullName>
    </alternativeName>
    <alternativeName>
        <fullName evidence="1">pX</fullName>
    </alternativeName>
</protein>
<proteinExistence type="inferred from homology"/>
<evidence type="ECO:0000255" key="1">
    <source>
        <dbReference type="HAMAP-Rule" id="MF_04074"/>
    </source>
</evidence>
<sequence length="154" mass="16760">MAARLCCQLDTSRDVLCLRPVGAESCGRPFSGPLRALPPSHPSALPTDYGAHLSLRGLPVCAFSSAGPCALRFTSARCMETTVNAPRNLPKVLHKRTLGLSAMSTTKIETYFKDCVFKDWEELGEEIRLKVFVLGGCRHKLVCTPAPCNFFTSA</sequence>